<comment type="function">
    <text evidence="1">Catalyzes the reversible cyclization of carbamoyl aspartate to dihydroorotate.</text>
</comment>
<comment type="catalytic activity">
    <reaction evidence="1">
        <text>(S)-dihydroorotate + H2O = N-carbamoyl-L-aspartate + H(+)</text>
        <dbReference type="Rhea" id="RHEA:24296"/>
        <dbReference type="ChEBI" id="CHEBI:15377"/>
        <dbReference type="ChEBI" id="CHEBI:15378"/>
        <dbReference type="ChEBI" id="CHEBI:30864"/>
        <dbReference type="ChEBI" id="CHEBI:32814"/>
        <dbReference type="EC" id="3.5.2.3"/>
    </reaction>
</comment>
<comment type="cofactor">
    <cofactor evidence="1">
        <name>Zn(2+)</name>
        <dbReference type="ChEBI" id="CHEBI:29105"/>
    </cofactor>
    <text evidence="1">Binds 2 Zn(2+) ions per subunit.</text>
</comment>
<comment type="pathway">
    <text evidence="1">Pyrimidine metabolism; UMP biosynthesis via de novo pathway; (S)-dihydroorotate from bicarbonate: step 3/3.</text>
</comment>
<comment type="similarity">
    <text evidence="1">Belongs to the metallo-dependent hydrolases superfamily. DHOase family. Class I DHOase subfamily.</text>
</comment>
<dbReference type="EC" id="3.5.2.3" evidence="1"/>
<dbReference type="EMBL" id="CP000413">
    <property type="protein sequence ID" value="ABJ60462.1"/>
    <property type="molecule type" value="Genomic_DNA"/>
</dbReference>
<dbReference type="RefSeq" id="WP_003647210.1">
    <property type="nucleotide sequence ID" value="NZ_WBMG01000002.1"/>
</dbReference>
<dbReference type="SMR" id="Q043B0"/>
<dbReference type="GeneID" id="29639082"/>
<dbReference type="KEGG" id="lga:LGAS_1089"/>
<dbReference type="HOGENOM" id="CLU_015572_1_0_9"/>
<dbReference type="BioCyc" id="LGAS324831:G1G6Y-1088-MONOMER"/>
<dbReference type="UniPathway" id="UPA00070">
    <property type="reaction ID" value="UER00117"/>
</dbReference>
<dbReference type="Proteomes" id="UP000000664">
    <property type="component" value="Chromosome"/>
</dbReference>
<dbReference type="GO" id="GO:0005737">
    <property type="term" value="C:cytoplasm"/>
    <property type="evidence" value="ECO:0007669"/>
    <property type="project" value="TreeGrafter"/>
</dbReference>
<dbReference type="GO" id="GO:0004038">
    <property type="term" value="F:allantoinase activity"/>
    <property type="evidence" value="ECO:0007669"/>
    <property type="project" value="TreeGrafter"/>
</dbReference>
<dbReference type="GO" id="GO:0004151">
    <property type="term" value="F:dihydroorotase activity"/>
    <property type="evidence" value="ECO:0007669"/>
    <property type="project" value="UniProtKB-UniRule"/>
</dbReference>
<dbReference type="GO" id="GO:0008270">
    <property type="term" value="F:zinc ion binding"/>
    <property type="evidence" value="ECO:0007669"/>
    <property type="project" value="UniProtKB-UniRule"/>
</dbReference>
<dbReference type="GO" id="GO:0044205">
    <property type="term" value="P:'de novo' UMP biosynthetic process"/>
    <property type="evidence" value="ECO:0007669"/>
    <property type="project" value="UniProtKB-UniRule"/>
</dbReference>
<dbReference type="GO" id="GO:0006145">
    <property type="term" value="P:purine nucleobase catabolic process"/>
    <property type="evidence" value="ECO:0007669"/>
    <property type="project" value="TreeGrafter"/>
</dbReference>
<dbReference type="CDD" id="cd01317">
    <property type="entry name" value="DHOase_IIa"/>
    <property type="match status" value="1"/>
</dbReference>
<dbReference type="Gene3D" id="3.20.20.140">
    <property type="entry name" value="Metal-dependent hydrolases"/>
    <property type="match status" value="1"/>
</dbReference>
<dbReference type="HAMAP" id="MF_00220_B">
    <property type="entry name" value="PyrC_classI_B"/>
    <property type="match status" value="1"/>
</dbReference>
<dbReference type="InterPro" id="IPR006680">
    <property type="entry name" value="Amidohydro-rel"/>
</dbReference>
<dbReference type="InterPro" id="IPR004722">
    <property type="entry name" value="DHOase"/>
</dbReference>
<dbReference type="InterPro" id="IPR050138">
    <property type="entry name" value="DHOase/Allantoinase_Hydrolase"/>
</dbReference>
<dbReference type="InterPro" id="IPR002195">
    <property type="entry name" value="Dihydroorotase_CS"/>
</dbReference>
<dbReference type="InterPro" id="IPR011059">
    <property type="entry name" value="Metal-dep_hydrolase_composite"/>
</dbReference>
<dbReference type="InterPro" id="IPR032466">
    <property type="entry name" value="Metal_Hydrolase"/>
</dbReference>
<dbReference type="NCBIfam" id="NF006837">
    <property type="entry name" value="PRK09357.1-2"/>
    <property type="match status" value="1"/>
</dbReference>
<dbReference type="NCBIfam" id="TIGR00857">
    <property type="entry name" value="pyrC_multi"/>
    <property type="match status" value="1"/>
</dbReference>
<dbReference type="PANTHER" id="PTHR43668">
    <property type="entry name" value="ALLANTOINASE"/>
    <property type="match status" value="1"/>
</dbReference>
<dbReference type="PANTHER" id="PTHR43668:SF2">
    <property type="entry name" value="ALLANTOINASE"/>
    <property type="match status" value="1"/>
</dbReference>
<dbReference type="Pfam" id="PF01979">
    <property type="entry name" value="Amidohydro_1"/>
    <property type="match status" value="1"/>
</dbReference>
<dbReference type="SUPFAM" id="SSF51338">
    <property type="entry name" value="Composite domain of metallo-dependent hydrolases"/>
    <property type="match status" value="1"/>
</dbReference>
<dbReference type="SUPFAM" id="SSF51556">
    <property type="entry name" value="Metallo-dependent hydrolases"/>
    <property type="match status" value="1"/>
</dbReference>
<dbReference type="PROSITE" id="PS00483">
    <property type="entry name" value="DIHYDROOROTASE_2"/>
    <property type="match status" value="1"/>
</dbReference>
<gene>
    <name evidence="1" type="primary">pyrC</name>
    <name type="ordered locus">LGAS_1089</name>
</gene>
<feature type="chain" id="PRO_1000024089" description="Dihydroorotase">
    <location>
        <begin position="1"/>
        <end position="425"/>
    </location>
</feature>
<feature type="active site" evidence="1">
    <location>
        <position position="301"/>
    </location>
</feature>
<feature type="binding site" evidence="1">
    <location>
        <position position="56"/>
    </location>
    <ligand>
        <name>Zn(2+)</name>
        <dbReference type="ChEBI" id="CHEBI:29105"/>
        <label>1</label>
    </ligand>
</feature>
<feature type="binding site" evidence="1">
    <location>
        <begin position="58"/>
        <end position="60"/>
    </location>
    <ligand>
        <name>substrate</name>
    </ligand>
</feature>
<feature type="binding site" evidence="1">
    <location>
        <position position="58"/>
    </location>
    <ligand>
        <name>Zn(2+)</name>
        <dbReference type="ChEBI" id="CHEBI:29105"/>
        <label>1</label>
    </ligand>
</feature>
<feature type="binding site" evidence="1">
    <location>
        <position position="90"/>
    </location>
    <ligand>
        <name>substrate</name>
    </ligand>
</feature>
<feature type="binding site" evidence="1">
    <location>
        <position position="148"/>
    </location>
    <ligand>
        <name>Zn(2+)</name>
        <dbReference type="ChEBI" id="CHEBI:29105"/>
        <label>1</label>
    </ligand>
</feature>
<feature type="binding site" evidence="1">
    <location>
        <position position="148"/>
    </location>
    <ligand>
        <name>Zn(2+)</name>
        <dbReference type="ChEBI" id="CHEBI:29105"/>
        <label>2</label>
    </ligand>
</feature>
<feature type="binding site" evidence="1">
    <location>
        <position position="175"/>
    </location>
    <ligand>
        <name>Zn(2+)</name>
        <dbReference type="ChEBI" id="CHEBI:29105"/>
        <label>2</label>
    </ligand>
</feature>
<feature type="binding site" evidence="1">
    <location>
        <position position="228"/>
    </location>
    <ligand>
        <name>Zn(2+)</name>
        <dbReference type="ChEBI" id="CHEBI:29105"/>
        <label>2</label>
    </ligand>
</feature>
<feature type="binding site" evidence="1">
    <location>
        <position position="274"/>
    </location>
    <ligand>
        <name>substrate</name>
    </ligand>
</feature>
<feature type="binding site" evidence="1">
    <location>
        <position position="301"/>
    </location>
    <ligand>
        <name>Zn(2+)</name>
        <dbReference type="ChEBI" id="CHEBI:29105"/>
        <label>1</label>
    </ligand>
</feature>
<feature type="binding site" evidence="1">
    <location>
        <position position="305"/>
    </location>
    <ligand>
        <name>substrate</name>
    </ligand>
</feature>
<feature type="binding site" evidence="1">
    <location>
        <begin position="319"/>
        <end position="320"/>
    </location>
    <ligand>
        <name>substrate</name>
    </ligand>
</feature>
<organism>
    <name type="scientific">Lactobacillus gasseri (strain ATCC 33323 / DSM 20243 / BCRC 14619 / CIP 102991 / JCM 1131 / KCTC 3163 / NCIMB 11718 / NCTC 13722 / AM63)</name>
    <dbReference type="NCBI Taxonomy" id="324831"/>
    <lineage>
        <taxon>Bacteria</taxon>
        <taxon>Bacillati</taxon>
        <taxon>Bacillota</taxon>
        <taxon>Bacilli</taxon>
        <taxon>Lactobacillales</taxon>
        <taxon>Lactobacillaceae</taxon>
        <taxon>Lactobacillus</taxon>
    </lineage>
</organism>
<name>PYRC_LACGA</name>
<evidence type="ECO:0000255" key="1">
    <source>
        <dbReference type="HAMAP-Rule" id="MF_00220"/>
    </source>
</evidence>
<keyword id="KW-0378">Hydrolase</keyword>
<keyword id="KW-0479">Metal-binding</keyword>
<keyword id="KW-0665">Pyrimidine biosynthesis</keyword>
<keyword id="KW-0862">Zinc</keyword>
<accession>Q043B0</accession>
<protein>
    <recommendedName>
        <fullName evidence="1">Dihydroorotase</fullName>
        <shortName evidence="1">DHOase</shortName>
        <ecNumber evidence="1">3.5.2.3</ecNumber>
    </recommendedName>
</protein>
<proteinExistence type="inferred from homology"/>
<sequence length="425" mass="46019">MATVIKNGTVYQNGRLIKADVLIEGKKIKAIGTDLDAEKIIDAQGMLVSPGLVDVHVHYRDPGQTYKEDIKTGSEAAARGGFTTVGAMPNVTPVPNTPELMKKMVEENKHKGVVHIFQYGPITNDETTDIIPDYAALKKAGAFALSNDGHGVQTAQTMYLAMQKAKENNLIIATHAQDDSLFNKGIVNEGVAAKKLDLPPVTELAETTQIARDLLLAQKTGVHYHICHVSTKTSVELVRLAKARGINVTCEVAPHHILLTDSDIPKDNGYFKMNPPLRNKEDQAALLVGLLDGTIDLIATDHAPHAKSEKQGGMKNAAFGITGSETAFSTLYTKFVKEEKVLSLEQLLALLSDKPAKVFGIENAGVLEPGKNADVAIFDIEHKNEIKEADFKSKGVNTPFTGQKVYGETVMTLVDGEVVYQRGTK</sequence>
<reference key="1">
    <citation type="journal article" date="2006" name="Proc. Natl. Acad. Sci. U.S.A.">
        <title>Comparative genomics of the lactic acid bacteria.</title>
        <authorList>
            <person name="Makarova K.S."/>
            <person name="Slesarev A."/>
            <person name="Wolf Y.I."/>
            <person name="Sorokin A."/>
            <person name="Mirkin B."/>
            <person name="Koonin E.V."/>
            <person name="Pavlov A."/>
            <person name="Pavlova N."/>
            <person name="Karamychev V."/>
            <person name="Polouchine N."/>
            <person name="Shakhova V."/>
            <person name="Grigoriev I."/>
            <person name="Lou Y."/>
            <person name="Rohksar D."/>
            <person name="Lucas S."/>
            <person name="Huang K."/>
            <person name="Goodstein D.M."/>
            <person name="Hawkins T."/>
            <person name="Plengvidhya V."/>
            <person name="Welker D."/>
            <person name="Hughes J."/>
            <person name="Goh Y."/>
            <person name="Benson A."/>
            <person name="Baldwin K."/>
            <person name="Lee J.-H."/>
            <person name="Diaz-Muniz I."/>
            <person name="Dosti B."/>
            <person name="Smeianov V."/>
            <person name="Wechter W."/>
            <person name="Barabote R."/>
            <person name="Lorca G."/>
            <person name="Altermann E."/>
            <person name="Barrangou R."/>
            <person name="Ganesan B."/>
            <person name="Xie Y."/>
            <person name="Rawsthorne H."/>
            <person name="Tamir D."/>
            <person name="Parker C."/>
            <person name="Breidt F."/>
            <person name="Broadbent J.R."/>
            <person name="Hutkins R."/>
            <person name="O'Sullivan D."/>
            <person name="Steele J."/>
            <person name="Unlu G."/>
            <person name="Saier M.H. Jr."/>
            <person name="Klaenhammer T."/>
            <person name="Richardson P."/>
            <person name="Kozyavkin S."/>
            <person name="Weimer B.C."/>
            <person name="Mills D.A."/>
        </authorList>
    </citation>
    <scope>NUCLEOTIDE SEQUENCE [LARGE SCALE GENOMIC DNA]</scope>
    <source>
        <strain>ATCC 33323 / DSM 20243 / BCRC 14619 / CIP 102991 / JCM 1131 / KCTC 3163 / NCIMB 11718 / NCTC 13722 / AM63</strain>
    </source>
</reference>